<reference key="1">
    <citation type="journal article" date="2005" name="Science">
        <title>The transcriptional landscape of the mammalian genome.</title>
        <authorList>
            <person name="Carninci P."/>
            <person name="Kasukawa T."/>
            <person name="Katayama S."/>
            <person name="Gough J."/>
            <person name="Frith M.C."/>
            <person name="Maeda N."/>
            <person name="Oyama R."/>
            <person name="Ravasi T."/>
            <person name="Lenhard B."/>
            <person name="Wells C."/>
            <person name="Kodzius R."/>
            <person name="Shimokawa K."/>
            <person name="Bajic V.B."/>
            <person name="Brenner S.E."/>
            <person name="Batalov S."/>
            <person name="Forrest A.R."/>
            <person name="Zavolan M."/>
            <person name="Davis M.J."/>
            <person name="Wilming L.G."/>
            <person name="Aidinis V."/>
            <person name="Allen J.E."/>
            <person name="Ambesi-Impiombato A."/>
            <person name="Apweiler R."/>
            <person name="Aturaliya R.N."/>
            <person name="Bailey T.L."/>
            <person name="Bansal M."/>
            <person name="Baxter L."/>
            <person name="Beisel K.W."/>
            <person name="Bersano T."/>
            <person name="Bono H."/>
            <person name="Chalk A.M."/>
            <person name="Chiu K.P."/>
            <person name="Choudhary V."/>
            <person name="Christoffels A."/>
            <person name="Clutterbuck D.R."/>
            <person name="Crowe M.L."/>
            <person name="Dalla E."/>
            <person name="Dalrymple B.P."/>
            <person name="de Bono B."/>
            <person name="Della Gatta G."/>
            <person name="di Bernardo D."/>
            <person name="Down T."/>
            <person name="Engstrom P."/>
            <person name="Fagiolini M."/>
            <person name="Faulkner G."/>
            <person name="Fletcher C.F."/>
            <person name="Fukushima T."/>
            <person name="Furuno M."/>
            <person name="Futaki S."/>
            <person name="Gariboldi M."/>
            <person name="Georgii-Hemming P."/>
            <person name="Gingeras T.R."/>
            <person name="Gojobori T."/>
            <person name="Green R.E."/>
            <person name="Gustincich S."/>
            <person name="Harbers M."/>
            <person name="Hayashi Y."/>
            <person name="Hensch T.K."/>
            <person name="Hirokawa N."/>
            <person name="Hill D."/>
            <person name="Huminiecki L."/>
            <person name="Iacono M."/>
            <person name="Ikeo K."/>
            <person name="Iwama A."/>
            <person name="Ishikawa T."/>
            <person name="Jakt M."/>
            <person name="Kanapin A."/>
            <person name="Katoh M."/>
            <person name="Kawasawa Y."/>
            <person name="Kelso J."/>
            <person name="Kitamura H."/>
            <person name="Kitano H."/>
            <person name="Kollias G."/>
            <person name="Krishnan S.P."/>
            <person name="Kruger A."/>
            <person name="Kummerfeld S.K."/>
            <person name="Kurochkin I.V."/>
            <person name="Lareau L.F."/>
            <person name="Lazarevic D."/>
            <person name="Lipovich L."/>
            <person name="Liu J."/>
            <person name="Liuni S."/>
            <person name="McWilliam S."/>
            <person name="Madan Babu M."/>
            <person name="Madera M."/>
            <person name="Marchionni L."/>
            <person name="Matsuda H."/>
            <person name="Matsuzawa S."/>
            <person name="Miki H."/>
            <person name="Mignone F."/>
            <person name="Miyake S."/>
            <person name="Morris K."/>
            <person name="Mottagui-Tabar S."/>
            <person name="Mulder N."/>
            <person name="Nakano N."/>
            <person name="Nakauchi H."/>
            <person name="Ng P."/>
            <person name="Nilsson R."/>
            <person name="Nishiguchi S."/>
            <person name="Nishikawa S."/>
            <person name="Nori F."/>
            <person name="Ohara O."/>
            <person name="Okazaki Y."/>
            <person name="Orlando V."/>
            <person name="Pang K.C."/>
            <person name="Pavan W.J."/>
            <person name="Pavesi G."/>
            <person name="Pesole G."/>
            <person name="Petrovsky N."/>
            <person name="Piazza S."/>
            <person name="Reed J."/>
            <person name="Reid J.F."/>
            <person name="Ring B.Z."/>
            <person name="Ringwald M."/>
            <person name="Rost B."/>
            <person name="Ruan Y."/>
            <person name="Salzberg S.L."/>
            <person name="Sandelin A."/>
            <person name="Schneider C."/>
            <person name="Schoenbach C."/>
            <person name="Sekiguchi K."/>
            <person name="Semple C.A."/>
            <person name="Seno S."/>
            <person name="Sessa L."/>
            <person name="Sheng Y."/>
            <person name="Shibata Y."/>
            <person name="Shimada H."/>
            <person name="Shimada K."/>
            <person name="Silva D."/>
            <person name="Sinclair B."/>
            <person name="Sperling S."/>
            <person name="Stupka E."/>
            <person name="Sugiura K."/>
            <person name="Sultana R."/>
            <person name="Takenaka Y."/>
            <person name="Taki K."/>
            <person name="Tammoja K."/>
            <person name="Tan S.L."/>
            <person name="Tang S."/>
            <person name="Taylor M.S."/>
            <person name="Tegner J."/>
            <person name="Teichmann S.A."/>
            <person name="Ueda H.R."/>
            <person name="van Nimwegen E."/>
            <person name="Verardo R."/>
            <person name="Wei C.L."/>
            <person name="Yagi K."/>
            <person name="Yamanishi H."/>
            <person name="Zabarovsky E."/>
            <person name="Zhu S."/>
            <person name="Zimmer A."/>
            <person name="Hide W."/>
            <person name="Bult C."/>
            <person name="Grimmond S.M."/>
            <person name="Teasdale R.D."/>
            <person name="Liu E.T."/>
            <person name="Brusic V."/>
            <person name="Quackenbush J."/>
            <person name="Wahlestedt C."/>
            <person name="Mattick J.S."/>
            <person name="Hume D.A."/>
            <person name="Kai C."/>
            <person name="Sasaki D."/>
            <person name="Tomaru Y."/>
            <person name="Fukuda S."/>
            <person name="Kanamori-Katayama M."/>
            <person name="Suzuki M."/>
            <person name="Aoki J."/>
            <person name="Arakawa T."/>
            <person name="Iida J."/>
            <person name="Imamura K."/>
            <person name="Itoh M."/>
            <person name="Kato T."/>
            <person name="Kawaji H."/>
            <person name="Kawagashira N."/>
            <person name="Kawashima T."/>
            <person name="Kojima M."/>
            <person name="Kondo S."/>
            <person name="Konno H."/>
            <person name="Nakano K."/>
            <person name="Ninomiya N."/>
            <person name="Nishio T."/>
            <person name="Okada M."/>
            <person name="Plessy C."/>
            <person name="Shibata K."/>
            <person name="Shiraki T."/>
            <person name="Suzuki S."/>
            <person name="Tagami M."/>
            <person name="Waki K."/>
            <person name="Watahiki A."/>
            <person name="Okamura-Oho Y."/>
            <person name="Suzuki H."/>
            <person name="Kawai J."/>
            <person name="Hayashizaki Y."/>
        </authorList>
    </citation>
    <scope>NUCLEOTIDE SEQUENCE [LARGE SCALE MRNA]</scope>
    <source>
        <strain>C57BL/6J</strain>
        <tissue>Lung</tissue>
    </source>
</reference>
<reference key="2">
    <citation type="journal article" date="2009" name="PLoS Biol.">
        <title>Lineage-specific biology revealed by a finished genome assembly of the mouse.</title>
        <authorList>
            <person name="Church D.M."/>
            <person name="Goodstadt L."/>
            <person name="Hillier L.W."/>
            <person name="Zody M.C."/>
            <person name="Goldstein S."/>
            <person name="She X."/>
            <person name="Bult C.J."/>
            <person name="Agarwala R."/>
            <person name="Cherry J.L."/>
            <person name="DiCuccio M."/>
            <person name="Hlavina W."/>
            <person name="Kapustin Y."/>
            <person name="Meric P."/>
            <person name="Maglott D."/>
            <person name="Birtle Z."/>
            <person name="Marques A.C."/>
            <person name="Graves T."/>
            <person name="Zhou S."/>
            <person name="Teague B."/>
            <person name="Potamousis K."/>
            <person name="Churas C."/>
            <person name="Place M."/>
            <person name="Herschleb J."/>
            <person name="Runnheim R."/>
            <person name="Forrest D."/>
            <person name="Amos-Landgraf J."/>
            <person name="Schwartz D.C."/>
            <person name="Cheng Z."/>
            <person name="Lindblad-Toh K."/>
            <person name="Eichler E.E."/>
            <person name="Ponting C.P."/>
        </authorList>
    </citation>
    <scope>NUCLEOTIDE SEQUENCE [LARGE SCALE GENOMIC DNA]</scope>
    <source>
        <strain>C57BL/6J</strain>
    </source>
</reference>
<reference key="3">
    <citation type="journal article" date="2004" name="Genome Res.">
        <title>The status, quality, and expansion of the NIH full-length cDNA project: the Mammalian Gene Collection (MGC).</title>
        <authorList>
            <consortium name="The MGC Project Team"/>
        </authorList>
    </citation>
    <scope>NUCLEOTIDE SEQUENCE [LARGE SCALE MRNA]</scope>
    <source>
        <strain>FVB/N</strain>
        <tissue>Kidney</tissue>
    </source>
</reference>
<reference key="4">
    <citation type="submission" date="2007-07" db="UniProtKB">
        <authorList>
            <person name="Lubec G."/>
            <person name="Klug S."/>
            <person name="Yang J.W."/>
            <person name="Zigmond M."/>
        </authorList>
    </citation>
    <scope>PROTEIN SEQUENCE OF 1-16; 27-39; 62-73 AND 89-96</scope>
    <scope>IDENTIFICATION BY MASS SPECTROMETRY</scope>
    <source>
        <tissue>Brain</tissue>
        <tissue>Hippocampus</tissue>
    </source>
</reference>
<reference key="5">
    <citation type="journal article" date="2010" name="Cell">
        <title>A tissue-specific atlas of mouse protein phosphorylation and expression.</title>
        <authorList>
            <person name="Huttlin E.L."/>
            <person name="Jedrychowski M.P."/>
            <person name="Elias J.E."/>
            <person name="Goswami T."/>
            <person name="Rad R."/>
            <person name="Beausoleil S.A."/>
            <person name="Villen J."/>
            <person name="Haas W."/>
            <person name="Sowa M.E."/>
            <person name="Gygi S.P."/>
        </authorList>
    </citation>
    <scope>IDENTIFICATION BY MASS SPECTROMETRY [LARGE SCALE ANALYSIS]</scope>
    <source>
        <tissue>Brain</tissue>
        <tissue>Brown adipose tissue</tissue>
        <tissue>Heart</tissue>
        <tissue>Kidney</tissue>
        <tissue>Liver</tissue>
        <tissue>Lung</tissue>
        <tissue>Pancreas</tissue>
        <tissue>Spleen</tissue>
        <tissue>Testis</tissue>
    </source>
</reference>
<reference key="6">
    <citation type="journal article" date="2013" name="Mol. Cell">
        <title>SIRT5-mediated lysine desuccinylation impacts diverse metabolic pathways.</title>
        <authorList>
            <person name="Park J."/>
            <person name="Chen Y."/>
            <person name="Tishkoff D.X."/>
            <person name="Peng C."/>
            <person name="Tan M."/>
            <person name="Dai L."/>
            <person name="Xie Z."/>
            <person name="Zhang Y."/>
            <person name="Zwaans B.M."/>
            <person name="Skinner M.E."/>
            <person name="Lombard D.B."/>
            <person name="Zhao Y."/>
        </authorList>
    </citation>
    <scope>ACETYLATION [LARGE SCALE ANALYSIS] AT LYS-43</scope>
    <scope>SUCCINYLATION [LARGE SCALE ANALYSIS] AT LYS-106</scope>
    <scope>IDENTIFICATION BY MASS SPECTROMETRY [LARGE SCALE ANALYSIS]</scope>
    <source>
        <tissue>Embryonic fibroblast</tissue>
        <tissue>Liver</tissue>
    </source>
</reference>
<keyword id="KW-0007">Acetylation</keyword>
<keyword id="KW-0067">ATP-binding</keyword>
<keyword id="KW-0963">Cytoplasm</keyword>
<keyword id="KW-0903">Direct protein sequencing</keyword>
<keyword id="KW-1017">Isopeptide bond</keyword>
<keyword id="KW-0418">Kinase</keyword>
<keyword id="KW-0547">Nucleotide-binding</keyword>
<keyword id="KW-0539">Nucleus</keyword>
<keyword id="KW-0597">Phosphoprotein</keyword>
<keyword id="KW-0665">Pyrimidine biosynthesis</keyword>
<keyword id="KW-1185">Reference proteome</keyword>
<keyword id="KW-0808">Transferase</keyword>
<keyword id="KW-0832">Ubl conjugation</keyword>
<protein>
    <recommendedName>
        <fullName evidence="3">UMP-CMP kinase</fullName>
        <ecNumber evidence="3">2.7.4.14</ecNumber>
    </recommendedName>
    <alternativeName>
        <fullName evidence="3">Deoxycytidylate kinase</fullName>
        <shortName evidence="3">CK</shortName>
        <shortName evidence="3">dCMP kinase</shortName>
    </alternativeName>
    <alternativeName>
        <fullName evidence="3">Nucleoside-diphosphate kinase</fullName>
        <ecNumber evidence="3">2.7.4.6</ecNumber>
    </alternativeName>
    <alternativeName>
        <fullName evidence="3">Uridine monophosphate/cytidine monophosphate kinase</fullName>
        <shortName evidence="3">UMP/CMP kinase</shortName>
        <shortName evidence="3">UMP/CMPK</shortName>
    </alternativeName>
</protein>
<evidence type="ECO:0000250" key="1">
    <source>
        <dbReference type="UniProtKB" id="P30085"/>
    </source>
</evidence>
<evidence type="ECO:0000250" key="2">
    <source>
        <dbReference type="UniProtKB" id="Q4KM73"/>
    </source>
</evidence>
<evidence type="ECO:0000255" key="3">
    <source>
        <dbReference type="HAMAP-Rule" id="MF_03172"/>
    </source>
</evidence>
<evidence type="ECO:0000305" key="4"/>
<evidence type="ECO:0007744" key="5">
    <source>
    </source>
</evidence>
<proteinExistence type="evidence at protein level"/>
<organism>
    <name type="scientific">Mus musculus</name>
    <name type="common">Mouse</name>
    <dbReference type="NCBI Taxonomy" id="10090"/>
    <lineage>
        <taxon>Eukaryota</taxon>
        <taxon>Metazoa</taxon>
        <taxon>Chordata</taxon>
        <taxon>Craniata</taxon>
        <taxon>Vertebrata</taxon>
        <taxon>Euteleostomi</taxon>
        <taxon>Mammalia</taxon>
        <taxon>Eutheria</taxon>
        <taxon>Euarchontoglires</taxon>
        <taxon>Glires</taxon>
        <taxon>Rodentia</taxon>
        <taxon>Myomorpha</taxon>
        <taxon>Muroidea</taxon>
        <taxon>Muridae</taxon>
        <taxon>Murinae</taxon>
        <taxon>Mus</taxon>
        <taxon>Mus</taxon>
    </lineage>
</organism>
<accession>Q9DBP5</accession>
<accession>Q8BK17</accession>
<accession>Q8VD05</accession>
<accession>Q9DCS7</accession>
<name>KCY_MOUSE</name>
<gene>
    <name type="primary">Cmpk1</name>
    <name type="synonym">Cmk</name>
    <name type="synonym">Cmpk</name>
    <name type="synonym">Uck</name>
    <name type="synonym">Umk</name>
    <name type="synonym">Umpk</name>
</gene>
<feature type="chain" id="PRO_0000158950" description="UMP-CMP kinase">
    <location>
        <begin position="1"/>
        <end position="196"/>
    </location>
</feature>
<feature type="region of interest" description="NMP" evidence="3">
    <location>
        <begin position="33"/>
        <end position="63"/>
    </location>
</feature>
<feature type="region of interest" description="LID" evidence="3">
    <location>
        <begin position="133"/>
        <end position="143"/>
    </location>
</feature>
<feature type="binding site" evidence="3">
    <location>
        <begin position="13"/>
        <end position="18"/>
    </location>
    <ligand>
        <name>ATP</name>
        <dbReference type="ChEBI" id="CHEBI:30616"/>
    </ligand>
</feature>
<feature type="binding site" evidence="3">
    <location>
        <position position="39"/>
    </location>
    <ligand>
        <name>a ribonucleoside 5'-phosphate</name>
        <dbReference type="ChEBI" id="CHEBI:58043"/>
    </ligand>
</feature>
<feature type="binding site" evidence="3">
    <location>
        <begin position="61"/>
        <end position="63"/>
    </location>
    <ligand>
        <name>a ribonucleoside 5'-phosphate</name>
        <dbReference type="ChEBI" id="CHEBI:58043"/>
    </ligand>
</feature>
<feature type="binding site" evidence="3">
    <location>
        <begin position="93"/>
        <end position="96"/>
    </location>
    <ligand>
        <name>a ribonucleoside 5'-phosphate</name>
        <dbReference type="ChEBI" id="CHEBI:58043"/>
    </ligand>
</feature>
<feature type="binding site" evidence="3">
    <location>
        <position position="100"/>
    </location>
    <ligand>
        <name>CMP</name>
        <dbReference type="ChEBI" id="CHEBI:60377"/>
    </ligand>
</feature>
<feature type="binding site" evidence="3">
    <location>
        <position position="134"/>
    </location>
    <ligand>
        <name>ATP</name>
        <dbReference type="ChEBI" id="CHEBI:30616"/>
    </ligand>
</feature>
<feature type="binding site" evidence="3">
    <location>
        <position position="140"/>
    </location>
    <ligand>
        <name>a ribonucleoside 5'-phosphate</name>
        <dbReference type="ChEBI" id="CHEBI:58043"/>
    </ligand>
</feature>
<feature type="binding site" evidence="3">
    <location>
        <position position="151"/>
    </location>
    <ligand>
        <name>a ribonucleoside 5'-phosphate</name>
        <dbReference type="ChEBI" id="CHEBI:58043"/>
    </ligand>
</feature>
<feature type="binding site" evidence="3">
    <location>
        <position position="179"/>
    </location>
    <ligand>
        <name>ATP</name>
        <dbReference type="ChEBI" id="CHEBI:30616"/>
    </ligand>
</feature>
<feature type="modified residue" description="Phosphoserine" evidence="1">
    <location>
        <position position="33"/>
    </location>
</feature>
<feature type="modified residue" description="N6-acetyllysine" evidence="5">
    <location>
        <position position="43"/>
    </location>
</feature>
<feature type="modified residue" description="N6-acetyllysine" evidence="1">
    <location>
        <position position="55"/>
    </location>
</feature>
<feature type="modified residue" description="N6-succinyllysine" evidence="5">
    <location>
        <position position="106"/>
    </location>
</feature>
<feature type="modified residue" description="Phosphoserine" evidence="2">
    <location>
        <position position="180"/>
    </location>
</feature>
<feature type="cross-link" description="Glycyl lysine isopeptide (Lys-Gly) (interchain with G-Cter in SUMO2)" evidence="1">
    <location>
        <position position="73"/>
    </location>
</feature>
<dbReference type="EC" id="2.7.4.14" evidence="3"/>
<dbReference type="EC" id="2.7.4.6" evidence="3"/>
<dbReference type="EMBL" id="AK077534">
    <property type="protein sequence ID" value="BAC36852.1"/>
    <property type="status" value="ALT_INIT"/>
    <property type="molecule type" value="mRNA"/>
</dbReference>
<dbReference type="EMBL" id="AK002526">
    <property type="protein sequence ID" value="BAB22163.1"/>
    <property type="status" value="ALT_INIT"/>
    <property type="molecule type" value="mRNA"/>
</dbReference>
<dbReference type="EMBL" id="AL670035">
    <property type="protein sequence ID" value="CAM19996.1"/>
    <property type="status" value="ALT_INIT"/>
    <property type="molecule type" value="Genomic_DNA"/>
</dbReference>
<dbReference type="EMBL" id="AK162173">
    <property type="protein sequence ID" value="BAE36771.1"/>
    <property type="status" value="ALT_INIT"/>
    <property type="molecule type" value="mRNA"/>
</dbReference>
<dbReference type="EMBL" id="AK150162">
    <property type="protein sequence ID" value="BAE29352.1"/>
    <property type="status" value="ALT_INIT"/>
    <property type="molecule type" value="mRNA"/>
</dbReference>
<dbReference type="EMBL" id="AK146436">
    <property type="protein sequence ID" value="BAE27170.1"/>
    <property type="status" value="ALT_INIT"/>
    <property type="molecule type" value="mRNA"/>
</dbReference>
<dbReference type="EMBL" id="AK004827">
    <property type="protein sequence ID" value="BAB23595.1"/>
    <property type="molecule type" value="mRNA"/>
</dbReference>
<dbReference type="EMBL" id="BC017684">
    <property type="protein sequence ID" value="AAH17684.1"/>
    <property type="status" value="ALT_INIT"/>
    <property type="molecule type" value="mRNA"/>
</dbReference>
<dbReference type="RefSeq" id="NP_079923.3">
    <property type="nucleotide sequence ID" value="NM_025647.3"/>
</dbReference>
<dbReference type="SMR" id="Q9DBP5"/>
<dbReference type="BioGRID" id="211574">
    <property type="interactions" value="2"/>
</dbReference>
<dbReference type="FunCoup" id="Q9DBP5">
    <property type="interactions" value="2974"/>
</dbReference>
<dbReference type="IntAct" id="Q9DBP5">
    <property type="interactions" value="4"/>
</dbReference>
<dbReference type="MINT" id="Q9DBP5"/>
<dbReference type="STRING" id="10090.ENSMUSP00000030491"/>
<dbReference type="GlyGen" id="Q9DBP5">
    <property type="glycosylation" value="1 site, 1 O-linked glycan (1 site)"/>
</dbReference>
<dbReference type="iPTMnet" id="Q9DBP5"/>
<dbReference type="PhosphoSitePlus" id="Q9DBP5"/>
<dbReference type="SwissPalm" id="Q9DBP5"/>
<dbReference type="REPRODUCTION-2DPAGE" id="IPI00331146"/>
<dbReference type="REPRODUCTION-2DPAGE" id="Q9DBP5"/>
<dbReference type="CPTAC" id="non-CPTAC-3799"/>
<dbReference type="jPOST" id="Q9DBP5"/>
<dbReference type="PaxDb" id="10090-ENSMUSP00000030491"/>
<dbReference type="PeptideAtlas" id="Q9DBP5"/>
<dbReference type="ProteomicsDB" id="263423"/>
<dbReference type="Pumba" id="Q9DBP5"/>
<dbReference type="TopDownProteomics" id="Q9DBP5"/>
<dbReference type="DNASU" id="66588"/>
<dbReference type="GeneID" id="66588"/>
<dbReference type="KEGG" id="mmu:66588"/>
<dbReference type="UCSC" id="uc008ueg.2">
    <property type="organism name" value="mouse"/>
</dbReference>
<dbReference type="AGR" id="MGI:1913838"/>
<dbReference type="CTD" id="51727"/>
<dbReference type="MGI" id="MGI:1913838">
    <property type="gene designation" value="Cmpk1"/>
</dbReference>
<dbReference type="eggNOG" id="KOG3079">
    <property type="taxonomic scope" value="Eukaryota"/>
</dbReference>
<dbReference type="InParanoid" id="Q9DBP5"/>
<dbReference type="OrthoDB" id="442176at2759"/>
<dbReference type="PhylomeDB" id="Q9DBP5"/>
<dbReference type="TreeFam" id="TF354283"/>
<dbReference type="Reactome" id="R-MMU-499943">
    <property type="pathway name" value="Interconversion of nucleotide di- and triphosphates"/>
</dbReference>
<dbReference type="BioGRID-ORCS" id="66588">
    <property type="hits" value="20 hits in 78 CRISPR screens"/>
</dbReference>
<dbReference type="ChiTaRS" id="Cmpk1">
    <property type="organism name" value="mouse"/>
</dbReference>
<dbReference type="PRO" id="PR:Q9DBP5"/>
<dbReference type="Proteomes" id="UP000000589">
    <property type="component" value="Unplaced"/>
</dbReference>
<dbReference type="RNAct" id="Q9DBP5">
    <property type="molecule type" value="protein"/>
</dbReference>
<dbReference type="GO" id="GO:0005737">
    <property type="term" value="C:cytoplasm"/>
    <property type="evidence" value="ECO:0007669"/>
    <property type="project" value="UniProtKB-SubCell"/>
</dbReference>
<dbReference type="GO" id="GO:0005634">
    <property type="term" value="C:nucleus"/>
    <property type="evidence" value="ECO:0007669"/>
    <property type="project" value="UniProtKB-SubCell"/>
</dbReference>
<dbReference type="GO" id="GO:0005524">
    <property type="term" value="F:ATP binding"/>
    <property type="evidence" value="ECO:0007669"/>
    <property type="project" value="UniProtKB-KW"/>
</dbReference>
<dbReference type="GO" id="GO:0036430">
    <property type="term" value="F:CMP kinase activity"/>
    <property type="evidence" value="ECO:0007669"/>
    <property type="project" value="RHEA"/>
</dbReference>
<dbReference type="GO" id="GO:0036431">
    <property type="term" value="F:dCMP kinase activity"/>
    <property type="evidence" value="ECO:0007669"/>
    <property type="project" value="RHEA"/>
</dbReference>
<dbReference type="GO" id="GO:0004550">
    <property type="term" value="F:nucleoside diphosphate kinase activity"/>
    <property type="evidence" value="ECO:0000250"/>
    <property type="project" value="UniProtKB"/>
</dbReference>
<dbReference type="GO" id="GO:0033862">
    <property type="term" value="F:UMP kinase activity"/>
    <property type="evidence" value="ECO:0000266"/>
    <property type="project" value="MGI"/>
</dbReference>
<dbReference type="GO" id="GO:0006207">
    <property type="term" value="P:'de novo' pyrimidine nucleobase biosynthetic process"/>
    <property type="evidence" value="ECO:0007669"/>
    <property type="project" value="InterPro"/>
</dbReference>
<dbReference type="GO" id="GO:0006225">
    <property type="term" value="P:UDP biosynthetic process"/>
    <property type="evidence" value="ECO:0000266"/>
    <property type="project" value="MGI"/>
</dbReference>
<dbReference type="CDD" id="cd01428">
    <property type="entry name" value="ADK"/>
    <property type="match status" value="1"/>
</dbReference>
<dbReference type="FunFam" id="3.40.50.300:FF:000315">
    <property type="entry name" value="Adenylate kinase 1"/>
    <property type="match status" value="1"/>
</dbReference>
<dbReference type="Gene3D" id="3.40.50.300">
    <property type="entry name" value="P-loop containing nucleotide triphosphate hydrolases"/>
    <property type="match status" value="1"/>
</dbReference>
<dbReference type="HAMAP" id="MF_00235">
    <property type="entry name" value="Adenylate_kinase_Adk"/>
    <property type="match status" value="1"/>
</dbReference>
<dbReference type="HAMAP" id="MF_03172">
    <property type="entry name" value="Adenylate_kinase_UMP_CMP_kin"/>
    <property type="match status" value="1"/>
</dbReference>
<dbReference type="InterPro" id="IPR000850">
    <property type="entry name" value="Adenylat/UMP-CMP_kin"/>
</dbReference>
<dbReference type="InterPro" id="IPR033690">
    <property type="entry name" value="Adenylat_kinase_CS"/>
</dbReference>
<dbReference type="InterPro" id="IPR027417">
    <property type="entry name" value="P-loop_NTPase"/>
</dbReference>
<dbReference type="InterPro" id="IPR006266">
    <property type="entry name" value="UMP_CMP_kinase"/>
</dbReference>
<dbReference type="NCBIfam" id="TIGR01359">
    <property type="entry name" value="UMP_CMP_kin_fam"/>
    <property type="match status" value="1"/>
</dbReference>
<dbReference type="PANTHER" id="PTHR23359">
    <property type="entry name" value="NUCLEOTIDE KINASE"/>
    <property type="match status" value="1"/>
</dbReference>
<dbReference type="Pfam" id="PF00406">
    <property type="entry name" value="ADK"/>
    <property type="match status" value="1"/>
</dbReference>
<dbReference type="PRINTS" id="PR00094">
    <property type="entry name" value="ADENYLTKNASE"/>
</dbReference>
<dbReference type="SUPFAM" id="SSF52540">
    <property type="entry name" value="P-loop containing nucleoside triphosphate hydrolases"/>
    <property type="match status" value="1"/>
</dbReference>
<dbReference type="PROSITE" id="PS00113">
    <property type="entry name" value="ADENYLATE_KINASE"/>
    <property type="match status" value="1"/>
</dbReference>
<comment type="function">
    <text evidence="3">Catalyzes the phosphorylation of pyrimidine nucleoside monophosphates at the expense of ATP. Plays an important role in de novo pyrimidine nucleotide biosynthesis. Has preference for UMP and CMP as phosphate acceptors. Also displays broad nucleoside diphosphate kinase activity.</text>
</comment>
<comment type="catalytic activity">
    <reaction evidence="3">
        <text>CMP + ATP = CDP + ADP</text>
        <dbReference type="Rhea" id="RHEA:11600"/>
        <dbReference type="ChEBI" id="CHEBI:30616"/>
        <dbReference type="ChEBI" id="CHEBI:58069"/>
        <dbReference type="ChEBI" id="CHEBI:60377"/>
        <dbReference type="ChEBI" id="CHEBI:456216"/>
        <dbReference type="EC" id="2.7.4.14"/>
    </reaction>
</comment>
<comment type="catalytic activity">
    <reaction evidence="3">
        <text>dCMP + ATP = dCDP + ADP</text>
        <dbReference type="Rhea" id="RHEA:25094"/>
        <dbReference type="ChEBI" id="CHEBI:30616"/>
        <dbReference type="ChEBI" id="CHEBI:57566"/>
        <dbReference type="ChEBI" id="CHEBI:58593"/>
        <dbReference type="ChEBI" id="CHEBI:456216"/>
        <dbReference type="EC" id="2.7.4.14"/>
    </reaction>
</comment>
<comment type="catalytic activity">
    <reaction evidence="3">
        <text>UMP + ATP = UDP + ADP</text>
        <dbReference type="Rhea" id="RHEA:24400"/>
        <dbReference type="ChEBI" id="CHEBI:30616"/>
        <dbReference type="ChEBI" id="CHEBI:57865"/>
        <dbReference type="ChEBI" id="CHEBI:58223"/>
        <dbReference type="ChEBI" id="CHEBI:456216"/>
        <dbReference type="EC" id="2.7.4.14"/>
    </reaction>
</comment>
<comment type="catalytic activity">
    <reaction evidence="3">
        <text>a 2'-deoxyribonucleoside 5'-diphosphate + ATP = a 2'-deoxyribonucleoside 5'-triphosphate + ADP</text>
        <dbReference type="Rhea" id="RHEA:44640"/>
        <dbReference type="ChEBI" id="CHEBI:30616"/>
        <dbReference type="ChEBI" id="CHEBI:61560"/>
        <dbReference type="ChEBI" id="CHEBI:73316"/>
        <dbReference type="ChEBI" id="CHEBI:456216"/>
        <dbReference type="EC" id="2.7.4.6"/>
    </reaction>
</comment>
<comment type="catalytic activity">
    <reaction evidence="3">
        <text>a ribonucleoside 5'-diphosphate + ATP = a ribonucleoside 5'-triphosphate + ADP</text>
        <dbReference type="Rhea" id="RHEA:18113"/>
        <dbReference type="ChEBI" id="CHEBI:30616"/>
        <dbReference type="ChEBI" id="CHEBI:57930"/>
        <dbReference type="ChEBI" id="CHEBI:61557"/>
        <dbReference type="ChEBI" id="CHEBI:456216"/>
        <dbReference type="EC" id="2.7.4.6"/>
    </reaction>
</comment>
<comment type="cofactor">
    <cofactor evidence="3">
        <name>Mg(2+)</name>
        <dbReference type="ChEBI" id="CHEBI:18420"/>
    </cofactor>
    <text evidence="3">Binds 1 Mg(2+) ion per monomer.</text>
</comment>
<comment type="subunit">
    <text evidence="3">Monomer.</text>
</comment>
<comment type="subcellular location">
    <subcellularLocation>
        <location evidence="3">Nucleus</location>
    </subcellularLocation>
    <subcellularLocation>
        <location evidence="3">Cytoplasm</location>
    </subcellularLocation>
    <text evidence="3">Predominantly nuclear.</text>
</comment>
<comment type="domain">
    <text evidence="3">Consists of three domains, a large central CORE domain and two small peripheral domains, NMPbind and LID, which undergo movements during catalysis. The LID domain closes over the site of phosphoryl transfer upon ATP binding. Assembling and dissambling the active center during each catalytic cycle provides an effective means to prevent ATP hydrolysis.</text>
</comment>
<comment type="similarity">
    <text evidence="3">Belongs to the adenylate kinase family. UMP-CMP kinase subfamily.</text>
</comment>
<comment type="sequence caution" evidence="4">
    <conflict type="erroneous initiation">
        <sequence resource="EMBL-CDS" id="AAH17684"/>
    </conflict>
</comment>
<comment type="sequence caution" evidence="4">
    <conflict type="erroneous initiation">
        <sequence resource="EMBL-CDS" id="BAB22163"/>
    </conflict>
</comment>
<comment type="sequence caution" evidence="4">
    <conflict type="erroneous initiation">
        <sequence resource="EMBL-CDS" id="BAC36852"/>
    </conflict>
</comment>
<comment type="sequence caution" evidence="4">
    <conflict type="erroneous initiation">
        <sequence resource="EMBL-CDS" id="BAE27170"/>
    </conflict>
</comment>
<comment type="sequence caution" evidence="4">
    <conflict type="erroneous initiation">
        <sequence resource="EMBL-CDS" id="BAE29352"/>
    </conflict>
</comment>
<comment type="sequence caution" evidence="4">
    <conflict type="erroneous initiation">
        <sequence resource="EMBL-CDS" id="BAE36771"/>
    </conflict>
</comment>
<comment type="sequence caution" evidence="4">
    <conflict type="erroneous initiation">
        <sequence resource="EMBL-CDS" id="CAM19996"/>
    </conflict>
</comment>
<sequence length="196" mass="22165">MKPLVVFVLGGPGAGKGTQCARIVEKYGYTHLSAGELLRDERKNPDSQYGELIEKYIKEGKIVPVEITISLLKREMDQTMAANAQKNKFLIDGFPRNQDNLQGWNKTMDGKADVSFVLFFDCNNEICIERCLERGKSSGRSDDNRESLEKRIQTYLESTKPIIDLYEEMGKVKKIDASKSVDEVFGEVVKIFDKEG</sequence>